<dbReference type="EC" id="2.3.1.286" evidence="2"/>
<dbReference type="EMBL" id="AE014075">
    <property type="protein sequence ID" value="AAN79864.1"/>
    <property type="molecule type" value="Genomic_DNA"/>
</dbReference>
<dbReference type="RefSeq" id="WP_000952746.1">
    <property type="nucleotide sequence ID" value="NZ_CP051263.1"/>
</dbReference>
<dbReference type="SMR" id="Q8FIM4"/>
<dbReference type="STRING" id="199310.c1395"/>
<dbReference type="KEGG" id="ecc:c1395"/>
<dbReference type="eggNOG" id="COG0846">
    <property type="taxonomic scope" value="Bacteria"/>
</dbReference>
<dbReference type="HOGENOM" id="CLU_023643_3_1_6"/>
<dbReference type="Proteomes" id="UP000001410">
    <property type="component" value="Chromosome"/>
</dbReference>
<dbReference type="GO" id="GO:0005737">
    <property type="term" value="C:cytoplasm"/>
    <property type="evidence" value="ECO:0007669"/>
    <property type="project" value="UniProtKB-SubCell"/>
</dbReference>
<dbReference type="GO" id="GO:0017136">
    <property type="term" value="F:histone deacetylase activity, NAD-dependent"/>
    <property type="evidence" value="ECO:0007669"/>
    <property type="project" value="TreeGrafter"/>
</dbReference>
<dbReference type="GO" id="GO:0070403">
    <property type="term" value="F:NAD+ binding"/>
    <property type="evidence" value="ECO:0007669"/>
    <property type="project" value="UniProtKB-UniRule"/>
</dbReference>
<dbReference type="GO" id="GO:0160013">
    <property type="term" value="F:NAD-dependent protein de-2-hydroxyisobutyrylase activity"/>
    <property type="evidence" value="ECO:0007669"/>
    <property type="project" value="RHEA"/>
</dbReference>
<dbReference type="GO" id="GO:0036054">
    <property type="term" value="F:protein-malonyllysine demalonylase activity"/>
    <property type="evidence" value="ECO:0007669"/>
    <property type="project" value="InterPro"/>
</dbReference>
<dbReference type="GO" id="GO:0036055">
    <property type="term" value="F:protein-succinyllysine desuccinylase activity"/>
    <property type="evidence" value="ECO:0007669"/>
    <property type="project" value="UniProtKB-UniRule"/>
</dbReference>
<dbReference type="GO" id="GO:0008270">
    <property type="term" value="F:zinc ion binding"/>
    <property type="evidence" value="ECO:0007669"/>
    <property type="project" value="UniProtKB-UniRule"/>
</dbReference>
<dbReference type="CDD" id="cd01412">
    <property type="entry name" value="SIRT5_Af1_CobB"/>
    <property type="match status" value="1"/>
</dbReference>
<dbReference type="Gene3D" id="3.30.1600.10">
    <property type="entry name" value="SIR2/SIRT2 'Small Domain"/>
    <property type="match status" value="1"/>
</dbReference>
<dbReference type="Gene3D" id="3.40.50.1220">
    <property type="entry name" value="TPP-binding domain"/>
    <property type="match status" value="1"/>
</dbReference>
<dbReference type="HAMAP" id="MF_01121">
    <property type="entry name" value="Sirtuin_ClassIII"/>
    <property type="match status" value="1"/>
</dbReference>
<dbReference type="InterPro" id="IPR029035">
    <property type="entry name" value="DHS-like_NAD/FAD-binding_dom"/>
</dbReference>
<dbReference type="InterPro" id="IPR050134">
    <property type="entry name" value="NAD-dep_sirtuin_deacylases"/>
</dbReference>
<dbReference type="InterPro" id="IPR003000">
    <property type="entry name" value="Sirtuin"/>
</dbReference>
<dbReference type="InterPro" id="IPR026591">
    <property type="entry name" value="Sirtuin_cat_small_dom_sf"/>
</dbReference>
<dbReference type="InterPro" id="IPR027546">
    <property type="entry name" value="Sirtuin_class_III"/>
</dbReference>
<dbReference type="InterPro" id="IPR026590">
    <property type="entry name" value="Ssirtuin_cat_dom"/>
</dbReference>
<dbReference type="NCBIfam" id="NF001755">
    <property type="entry name" value="PRK00481.1-5"/>
    <property type="match status" value="1"/>
</dbReference>
<dbReference type="PANTHER" id="PTHR11085:SF4">
    <property type="entry name" value="NAD-DEPENDENT PROTEIN DEACYLASE"/>
    <property type="match status" value="1"/>
</dbReference>
<dbReference type="PANTHER" id="PTHR11085">
    <property type="entry name" value="NAD-DEPENDENT PROTEIN DEACYLASE SIRTUIN-5, MITOCHONDRIAL-RELATED"/>
    <property type="match status" value="1"/>
</dbReference>
<dbReference type="Pfam" id="PF02146">
    <property type="entry name" value="SIR2"/>
    <property type="match status" value="1"/>
</dbReference>
<dbReference type="SUPFAM" id="SSF52467">
    <property type="entry name" value="DHS-like NAD/FAD-binding domain"/>
    <property type="match status" value="1"/>
</dbReference>
<dbReference type="PROSITE" id="PS50305">
    <property type="entry name" value="SIRTUIN"/>
    <property type="match status" value="1"/>
</dbReference>
<evidence type="ECO:0000250" key="1">
    <source>
        <dbReference type="UniProtKB" id="P0A2F2"/>
    </source>
</evidence>
<evidence type="ECO:0000255" key="2">
    <source>
        <dbReference type="HAMAP-Rule" id="MF_01121"/>
    </source>
</evidence>
<evidence type="ECO:0000255" key="3">
    <source>
        <dbReference type="PROSITE-ProRule" id="PRU00236"/>
    </source>
</evidence>
<keyword id="KW-0877">Alternative promoter usage</keyword>
<keyword id="KW-0963">Cytoplasm</keyword>
<keyword id="KW-0479">Metal-binding</keyword>
<keyword id="KW-0520">NAD</keyword>
<keyword id="KW-1185">Reference proteome</keyword>
<keyword id="KW-0808">Transferase</keyword>
<keyword id="KW-0862">Zinc</keyword>
<reference key="1">
    <citation type="journal article" date="2002" name="Proc. Natl. Acad. Sci. U.S.A.">
        <title>Extensive mosaic structure revealed by the complete genome sequence of uropathogenic Escherichia coli.</title>
        <authorList>
            <person name="Welch R.A."/>
            <person name="Burland V."/>
            <person name="Plunkett G. III"/>
            <person name="Redford P."/>
            <person name="Roesch P."/>
            <person name="Rasko D."/>
            <person name="Buckles E.L."/>
            <person name="Liou S.-R."/>
            <person name="Boutin A."/>
            <person name="Hackett J."/>
            <person name="Stroud D."/>
            <person name="Mayhew G.F."/>
            <person name="Rose D.J."/>
            <person name="Zhou S."/>
            <person name="Schwartz D.C."/>
            <person name="Perna N.T."/>
            <person name="Mobley H.L.T."/>
            <person name="Donnenberg M.S."/>
            <person name="Blattner F.R."/>
        </authorList>
    </citation>
    <scope>NUCLEOTIDE SEQUENCE [LARGE SCALE GENOMIC DNA]</scope>
    <source>
        <strain>CFT073 / ATCC 700928 / UPEC</strain>
    </source>
</reference>
<name>NPD_ECOL6</name>
<organism>
    <name type="scientific">Escherichia coli O6:H1 (strain CFT073 / ATCC 700928 / UPEC)</name>
    <dbReference type="NCBI Taxonomy" id="199310"/>
    <lineage>
        <taxon>Bacteria</taxon>
        <taxon>Pseudomonadati</taxon>
        <taxon>Pseudomonadota</taxon>
        <taxon>Gammaproteobacteria</taxon>
        <taxon>Enterobacterales</taxon>
        <taxon>Enterobacteriaceae</taxon>
        <taxon>Escherichia</taxon>
    </lineage>
</organism>
<protein>
    <recommendedName>
        <fullName evidence="2">NAD-dependent protein deacylase</fullName>
        <ecNumber evidence="2">2.3.1.286</ecNumber>
    </recommendedName>
    <alternativeName>
        <fullName evidence="2">Regulatory protein SIR2 homolog</fullName>
    </alternativeName>
</protein>
<sequence length="273" mass="30966">MLSRRGHRLSRFRKNKRRLRERLRQRIFFRDKVVPEAMEKPRVLVLTGAGISAESGIRTFRAADGLWEEHRVEDVATPEGFDRDPELVQTFYNARRRQLQQPEIQPNAAHLALAKLQDALGDRFLLVTQNIDNLHERAGNTNVIHMHGELLKVRCSQSGQVLDWTGDVTPEDKCHCCQFPAPLRPHVVWFGEMPLGMDEIYMALSMADIFIAIGTSGHVYPAAGFVHEAKLHGAHTVELNLEPSQVGNEFAEKYYGPASQVVPEFVEKLLKGL</sequence>
<proteinExistence type="inferred from homology"/>
<gene>
    <name evidence="2" type="primary">cobB</name>
    <name type="ordered locus">c1395</name>
</gene>
<comment type="function">
    <text evidence="2">NAD-dependent lysine deacetylase that specifically removes acetyl groups on target proteins. Also acts as a protein-lysine deacylase by mediating protein desuccinylation and de-2-hydroxyisobutyrylation. Modulates the activities of several proteins which are inactive in their acylated form.</text>
</comment>
<comment type="catalytic activity">
    <reaction evidence="2">
        <text>N(6)-acetyl-L-lysyl-[protein] + NAD(+) + H2O = 2''-O-acetyl-ADP-D-ribose + nicotinamide + L-lysyl-[protein]</text>
        <dbReference type="Rhea" id="RHEA:43636"/>
        <dbReference type="Rhea" id="RHEA-COMP:9752"/>
        <dbReference type="Rhea" id="RHEA-COMP:10731"/>
        <dbReference type="ChEBI" id="CHEBI:15377"/>
        <dbReference type="ChEBI" id="CHEBI:17154"/>
        <dbReference type="ChEBI" id="CHEBI:29969"/>
        <dbReference type="ChEBI" id="CHEBI:57540"/>
        <dbReference type="ChEBI" id="CHEBI:61930"/>
        <dbReference type="ChEBI" id="CHEBI:83767"/>
        <dbReference type="EC" id="2.3.1.286"/>
    </reaction>
</comment>
<comment type="catalytic activity">
    <reaction evidence="2">
        <text>N(6)-succinyl-L-lysyl-[protein] + NAD(+) + H2O = 2''-O-succinyl-ADP-D-ribose + nicotinamide + L-lysyl-[protein]</text>
        <dbReference type="Rhea" id="RHEA:47668"/>
        <dbReference type="Rhea" id="RHEA-COMP:9752"/>
        <dbReference type="Rhea" id="RHEA-COMP:11877"/>
        <dbReference type="ChEBI" id="CHEBI:15377"/>
        <dbReference type="ChEBI" id="CHEBI:17154"/>
        <dbReference type="ChEBI" id="CHEBI:29969"/>
        <dbReference type="ChEBI" id="CHEBI:57540"/>
        <dbReference type="ChEBI" id="CHEBI:87830"/>
        <dbReference type="ChEBI" id="CHEBI:87832"/>
    </reaction>
</comment>
<comment type="catalytic activity">
    <reaction evidence="2">
        <text>N(6)-(2-hydroxyisobutanoyl)-L-lysyl-[protein] + NAD(+) + H2O = 2''-O-(2-hydroxyisobutanoyl)-ADP-D-ribose + nicotinamide + L-lysyl-[protein]</text>
        <dbReference type="Rhea" id="RHEA:24364"/>
        <dbReference type="Rhea" id="RHEA-COMP:9752"/>
        <dbReference type="Rhea" id="RHEA-COMP:15921"/>
        <dbReference type="ChEBI" id="CHEBI:15377"/>
        <dbReference type="ChEBI" id="CHEBI:17154"/>
        <dbReference type="ChEBI" id="CHEBI:29969"/>
        <dbReference type="ChEBI" id="CHEBI:57540"/>
        <dbReference type="ChEBI" id="CHEBI:144968"/>
        <dbReference type="ChEBI" id="CHEBI:144969"/>
    </reaction>
</comment>
<comment type="cofactor">
    <cofactor evidence="2">
        <name>Zn(2+)</name>
        <dbReference type="ChEBI" id="CHEBI:29105"/>
    </cofactor>
    <text evidence="2">Binds 1 zinc ion per subunit.</text>
</comment>
<comment type="subcellular location">
    <subcellularLocation>
        <location evidence="2">Cytoplasm</location>
    </subcellularLocation>
</comment>
<comment type="alternative products">
    <event type="alternative promoter"/>
    <isoform>
        <id>Q8FIM4-1</id>
        <name evidence="1">CobB-Long</name>
        <sequence type="displayed"/>
    </isoform>
    <isoform>
        <id>Q8FIM4-2</id>
        <name evidence="1">CobB-Short</name>
        <sequence type="described" ref="VSP_058460"/>
    </isoform>
</comment>
<comment type="domain">
    <text evidence="2">2 residues (Tyr-92 and Arg-95) present in a large hydrophobic pocket are probably involved in substrate specificity. They are important for desuccinylation activity, but dispensable for deacetylation activity.</text>
</comment>
<comment type="similarity">
    <text evidence="2">Belongs to the sirtuin family. Class III subfamily.</text>
</comment>
<feature type="chain" id="PRO_0000110313" description="NAD-dependent protein deacylase">
    <location>
        <begin position="1"/>
        <end position="273"/>
    </location>
</feature>
<feature type="domain" description="Deacetylase sirtuin-type" evidence="3">
    <location>
        <begin position="20"/>
        <end position="272"/>
    </location>
</feature>
<feature type="active site" description="Proton acceptor" evidence="2">
    <location>
        <position position="147"/>
    </location>
</feature>
<feature type="binding site" evidence="2">
    <location>
        <begin position="48"/>
        <end position="67"/>
    </location>
    <ligand>
        <name>NAD(+)</name>
        <dbReference type="ChEBI" id="CHEBI:57540"/>
    </ligand>
</feature>
<feature type="binding site" evidence="2">
    <location>
        <position position="92"/>
    </location>
    <ligand>
        <name>substrate</name>
    </ligand>
</feature>
<feature type="binding site" evidence="2">
    <location>
        <position position="95"/>
    </location>
    <ligand>
        <name>substrate</name>
    </ligand>
</feature>
<feature type="binding site" evidence="2">
    <location>
        <begin position="129"/>
        <end position="132"/>
    </location>
    <ligand>
        <name>NAD(+)</name>
        <dbReference type="ChEBI" id="CHEBI:57540"/>
    </ligand>
</feature>
<feature type="binding site" evidence="2">
    <location>
        <position position="155"/>
    </location>
    <ligand>
        <name>Zn(2+)</name>
        <dbReference type="ChEBI" id="CHEBI:29105"/>
    </ligand>
</feature>
<feature type="binding site" evidence="2">
    <location>
        <position position="174"/>
    </location>
    <ligand>
        <name>Zn(2+)</name>
        <dbReference type="ChEBI" id="CHEBI:29105"/>
    </ligand>
</feature>
<feature type="binding site" evidence="2">
    <location>
        <begin position="214"/>
        <end position="216"/>
    </location>
    <ligand>
        <name>NAD(+)</name>
        <dbReference type="ChEBI" id="CHEBI:57540"/>
    </ligand>
</feature>
<feature type="binding site" evidence="2">
    <location>
        <begin position="240"/>
        <end position="242"/>
    </location>
    <ligand>
        <name>NAD(+)</name>
        <dbReference type="ChEBI" id="CHEBI:57540"/>
    </ligand>
</feature>
<feature type="binding site" evidence="2">
    <location>
        <position position="258"/>
    </location>
    <ligand>
        <name>NAD(+)</name>
        <dbReference type="ChEBI" id="CHEBI:57540"/>
    </ligand>
</feature>
<feature type="splice variant" id="VSP_058460" description="In isoform CobB-Short." evidence="1">
    <location>
        <begin position="1"/>
        <end position="37"/>
    </location>
</feature>
<accession>Q8FIM4</accession>